<accession>Q2SD07</accession>
<keyword id="KW-0030">Aminoacyl-tRNA synthetase</keyword>
<keyword id="KW-0067">ATP-binding</keyword>
<keyword id="KW-0963">Cytoplasm</keyword>
<keyword id="KW-0436">Ligase</keyword>
<keyword id="KW-0547">Nucleotide-binding</keyword>
<keyword id="KW-0648">Protein biosynthesis</keyword>
<keyword id="KW-1185">Reference proteome</keyword>
<dbReference type="EC" id="6.1.1.15" evidence="1"/>
<dbReference type="EMBL" id="CP000155">
    <property type="protein sequence ID" value="ABC31467.1"/>
    <property type="molecule type" value="Genomic_DNA"/>
</dbReference>
<dbReference type="RefSeq" id="WP_011398532.1">
    <property type="nucleotide sequence ID" value="NC_007645.1"/>
</dbReference>
<dbReference type="SMR" id="Q2SD07"/>
<dbReference type="STRING" id="349521.HCH_04773"/>
<dbReference type="KEGG" id="hch:HCH_04773"/>
<dbReference type="eggNOG" id="COG0442">
    <property type="taxonomic scope" value="Bacteria"/>
</dbReference>
<dbReference type="HOGENOM" id="CLU_016739_0_0_6"/>
<dbReference type="OrthoDB" id="9809052at2"/>
<dbReference type="Proteomes" id="UP000000238">
    <property type="component" value="Chromosome"/>
</dbReference>
<dbReference type="GO" id="GO:0005829">
    <property type="term" value="C:cytosol"/>
    <property type="evidence" value="ECO:0007669"/>
    <property type="project" value="TreeGrafter"/>
</dbReference>
<dbReference type="GO" id="GO:0002161">
    <property type="term" value="F:aminoacyl-tRNA deacylase activity"/>
    <property type="evidence" value="ECO:0007669"/>
    <property type="project" value="InterPro"/>
</dbReference>
<dbReference type="GO" id="GO:0005524">
    <property type="term" value="F:ATP binding"/>
    <property type="evidence" value="ECO:0007669"/>
    <property type="project" value="UniProtKB-UniRule"/>
</dbReference>
<dbReference type="GO" id="GO:0004827">
    <property type="term" value="F:proline-tRNA ligase activity"/>
    <property type="evidence" value="ECO:0007669"/>
    <property type="project" value="UniProtKB-UniRule"/>
</dbReference>
<dbReference type="GO" id="GO:0006433">
    <property type="term" value="P:prolyl-tRNA aminoacylation"/>
    <property type="evidence" value="ECO:0007669"/>
    <property type="project" value="UniProtKB-UniRule"/>
</dbReference>
<dbReference type="CDD" id="cd04334">
    <property type="entry name" value="ProRS-INS"/>
    <property type="match status" value="1"/>
</dbReference>
<dbReference type="CDD" id="cd00861">
    <property type="entry name" value="ProRS_anticodon_short"/>
    <property type="match status" value="1"/>
</dbReference>
<dbReference type="CDD" id="cd00779">
    <property type="entry name" value="ProRS_core_prok"/>
    <property type="match status" value="1"/>
</dbReference>
<dbReference type="FunFam" id="3.30.930.10:FF:000043">
    <property type="entry name" value="Proline--tRNA ligase"/>
    <property type="match status" value="1"/>
</dbReference>
<dbReference type="FunFam" id="3.30.930.10:FF:000097">
    <property type="entry name" value="Proline--tRNA ligase"/>
    <property type="match status" value="1"/>
</dbReference>
<dbReference type="FunFam" id="3.40.50.800:FF:000006">
    <property type="entry name" value="Proline--tRNA ligase"/>
    <property type="match status" value="1"/>
</dbReference>
<dbReference type="Gene3D" id="3.40.50.800">
    <property type="entry name" value="Anticodon-binding domain"/>
    <property type="match status" value="1"/>
</dbReference>
<dbReference type="Gene3D" id="3.30.930.10">
    <property type="entry name" value="Bira Bifunctional Protein, Domain 2"/>
    <property type="match status" value="2"/>
</dbReference>
<dbReference type="HAMAP" id="MF_01569">
    <property type="entry name" value="Pro_tRNA_synth_type1"/>
    <property type="match status" value="1"/>
</dbReference>
<dbReference type="InterPro" id="IPR002314">
    <property type="entry name" value="aa-tRNA-synt_IIb"/>
</dbReference>
<dbReference type="InterPro" id="IPR006195">
    <property type="entry name" value="aa-tRNA-synth_II"/>
</dbReference>
<dbReference type="InterPro" id="IPR045864">
    <property type="entry name" value="aa-tRNA-synth_II/BPL/LPL"/>
</dbReference>
<dbReference type="InterPro" id="IPR004154">
    <property type="entry name" value="Anticodon-bd"/>
</dbReference>
<dbReference type="InterPro" id="IPR036621">
    <property type="entry name" value="Anticodon-bd_dom_sf"/>
</dbReference>
<dbReference type="InterPro" id="IPR002316">
    <property type="entry name" value="Pro-tRNA-ligase_IIa"/>
</dbReference>
<dbReference type="InterPro" id="IPR004500">
    <property type="entry name" value="Pro-tRNA-synth_IIa_bac-type"/>
</dbReference>
<dbReference type="InterPro" id="IPR023717">
    <property type="entry name" value="Pro-tRNA-Synthase_IIa_type1"/>
</dbReference>
<dbReference type="InterPro" id="IPR050062">
    <property type="entry name" value="Pro-tRNA_synthetase"/>
</dbReference>
<dbReference type="InterPro" id="IPR044140">
    <property type="entry name" value="ProRS_anticodon_short"/>
</dbReference>
<dbReference type="InterPro" id="IPR033730">
    <property type="entry name" value="ProRS_core_prok"/>
</dbReference>
<dbReference type="InterPro" id="IPR036754">
    <property type="entry name" value="YbaK/aa-tRNA-synt-asso_dom_sf"/>
</dbReference>
<dbReference type="InterPro" id="IPR007214">
    <property type="entry name" value="YbaK/aa-tRNA-synth-assoc-dom"/>
</dbReference>
<dbReference type="NCBIfam" id="NF006625">
    <property type="entry name" value="PRK09194.1"/>
    <property type="match status" value="1"/>
</dbReference>
<dbReference type="NCBIfam" id="TIGR00409">
    <property type="entry name" value="proS_fam_II"/>
    <property type="match status" value="1"/>
</dbReference>
<dbReference type="PANTHER" id="PTHR42753">
    <property type="entry name" value="MITOCHONDRIAL RIBOSOME PROTEIN L39/PROLYL-TRNA LIGASE FAMILY MEMBER"/>
    <property type="match status" value="1"/>
</dbReference>
<dbReference type="PANTHER" id="PTHR42753:SF2">
    <property type="entry name" value="PROLINE--TRNA LIGASE"/>
    <property type="match status" value="1"/>
</dbReference>
<dbReference type="Pfam" id="PF03129">
    <property type="entry name" value="HGTP_anticodon"/>
    <property type="match status" value="1"/>
</dbReference>
<dbReference type="Pfam" id="PF00587">
    <property type="entry name" value="tRNA-synt_2b"/>
    <property type="match status" value="1"/>
</dbReference>
<dbReference type="Pfam" id="PF04073">
    <property type="entry name" value="tRNA_edit"/>
    <property type="match status" value="1"/>
</dbReference>
<dbReference type="PIRSF" id="PIRSF001535">
    <property type="entry name" value="ProRS_1"/>
    <property type="match status" value="1"/>
</dbReference>
<dbReference type="PRINTS" id="PR01046">
    <property type="entry name" value="TRNASYNTHPRO"/>
</dbReference>
<dbReference type="SUPFAM" id="SSF52954">
    <property type="entry name" value="Class II aaRS ABD-related"/>
    <property type="match status" value="1"/>
</dbReference>
<dbReference type="SUPFAM" id="SSF55681">
    <property type="entry name" value="Class II aaRS and biotin synthetases"/>
    <property type="match status" value="1"/>
</dbReference>
<dbReference type="SUPFAM" id="SSF55826">
    <property type="entry name" value="YbaK/ProRS associated domain"/>
    <property type="match status" value="1"/>
</dbReference>
<dbReference type="PROSITE" id="PS50862">
    <property type="entry name" value="AA_TRNA_LIGASE_II"/>
    <property type="match status" value="1"/>
</dbReference>
<name>SYP_HAHCH</name>
<sequence length="574" mass="63401">MRASRYLIATLKETPADAEVISHQLMLRAGMIRKLAAGLYTWLPLGLRVLKKVENIVREEMDRSGAQEVLMPAVQPAELWIESGRWEQYGGELLRIHDRHNRDFCVGPTHEEVITDLIRNELKSYKQLPANFYQIQMKFRDERRPRFGIMRAREFLMKDAYSFHVNQESLDETYMVMYDAYTRIFTRFGLDFRPVQADSGSIGGSSSHEFHVLANSGEDLIAFSTESDYAANLEKAEALTTLKQAPAPSKDMAKVATPGQRTIESVSEFLNLPAEQTVKTLLVLGEAEEGKPAPIIALVLRGDHVLNEIKAEKLPGVASPLTFASDEAIEAAVGCKPGSIGPVNLPLRTIVDNSAAVLANFVCGANEEGQHLTGVNWGRDCEIKETADLRNVVEGDLSPDGKGVLVLKKGIEVGHVFKLGDKYSSAMNATVLDENGKATVMQMGCYGIGVSRVVAAAIEQGHDDKGIIWPDALAPFEVALVPLNMHKSDVVREKAESLYAELLQAGVDVLLDDRNERPGVKFAEMELIGIPHRVVISDRGLAEGKVEYKGRRDTDSTDMTVDTVVNFIKEKLKK</sequence>
<reference key="1">
    <citation type="journal article" date="2005" name="Nucleic Acids Res.">
        <title>Genomic blueprint of Hahella chejuensis, a marine microbe producing an algicidal agent.</title>
        <authorList>
            <person name="Jeong H."/>
            <person name="Yim J.H."/>
            <person name="Lee C."/>
            <person name="Choi S.-H."/>
            <person name="Park Y.K."/>
            <person name="Yoon S.H."/>
            <person name="Hur C.-G."/>
            <person name="Kang H.-Y."/>
            <person name="Kim D."/>
            <person name="Lee H.H."/>
            <person name="Park K.H."/>
            <person name="Park S.-H."/>
            <person name="Park H.-S."/>
            <person name="Lee H.K."/>
            <person name="Oh T.K."/>
            <person name="Kim J.F."/>
        </authorList>
    </citation>
    <scope>NUCLEOTIDE SEQUENCE [LARGE SCALE GENOMIC DNA]</scope>
    <source>
        <strain>KCTC 2396</strain>
    </source>
</reference>
<organism>
    <name type="scientific">Hahella chejuensis (strain KCTC 2396)</name>
    <dbReference type="NCBI Taxonomy" id="349521"/>
    <lineage>
        <taxon>Bacteria</taxon>
        <taxon>Pseudomonadati</taxon>
        <taxon>Pseudomonadota</taxon>
        <taxon>Gammaproteobacteria</taxon>
        <taxon>Oceanospirillales</taxon>
        <taxon>Hahellaceae</taxon>
        <taxon>Hahella</taxon>
    </lineage>
</organism>
<protein>
    <recommendedName>
        <fullName evidence="1">Proline--tRNA ligase</fullName>
        <ecNumber evidence="1">6.1.1.15</ecNumber>
    </recommendedName>
    <alternativeName>
        <fullName evidence="1">Prolyl-tRNA synthetase</fullName>
        <shortName evidence="1">ProRS</shortName>
    </alternativeName>
</protein>
<feature type="chain" id="PRO_0000248702" description="Proline--tRNA ligase">
    <location>
        <begin position="1"/>
        <end position="574"/>
    </location>
</feature>
<comment type="function">
    <text evidence="1">Catalyzes the attachment of proline to tRNA(Pro) in a two-step reaction: proline is first activated by ATP to form Pro-AMP and then transferred to the acceptor end of tRNA(Pro). As ProRS can inadvertently accommodate and process non-cognate amino acids such as alanine and cysteine, to avoid such errors it has two additional distinct editing activities against alanine. One activity is designated as 'pretransfer' editing and involves the tRNA(Pro)-independent hydrolysis of activated Ala-AMP. The other activity is designated 'posttransfer' editing and involves deacylation of mischarged Ala-tRNA(Pro). The misacylated Cys-tRNA(Pro) is not edited by ProRS.</text>
</comment>
<comment type="catalytic activity">
    <reaction evidence="1">
        <text>tRNA(Pro) + L-proline + ATP = L-prolyl-tRNA(Pro) + AMP + diphosphate</text>
        <dbReference type="Rhea" id="RHEA:14305"/>
        <dbReference type="Rhea" id="RHEA-COMP:9700"/>
        <dbReference type="Rhea" id="RHEA-COMP:9702"/>
        <dbReference type="ChEBI" id="CHEBI:30616"/>
        <dbReference type="ChEBI" id="CHEBI:33019"/>
        <dbReference type="ChEBI" id="CHEBI:60039"/>
        <dbReference type="ChEBI" id="CHEBI:78442"/>
        <dbReference type="ChEBI" id="CHEBI:78532"/>
        <dbReference type="ChEBI" id="CHEBI:456215"/>
        <dbReference type="EC" id="6.1.1.15"/>
    </reaction>
</comment>
<comment type="subunit">
    <text evidence="1">Homodimer.</text>
</comment>
<comment type="subcellular location">
    <subcellularLocation>
        <location evidence="1">Cytoplasm</location>
    </subcellularLocation>
</comment>
<comment type="domain">
    <text evidence="1">Consists of three domains: the N-terminal catalytic domain, the editing domain and the C-terminal anticodon-binding domain.</text>
</comment>
<comment type="similarity">
    <text evidence="1">Belongs to the class-II aminoacyl-tRNA synthetase family. ProS type 1 subfamily.</text>
</comment>
<gene>
    <name evidence="1" type="primary">proS</name>
    <name type="ordered locus">HCH_04773</name>
</gene>
<proteinExistence type="inferred from homology"/>
<evidence type="ECO:0000255" key="1">
    <source>
        <dbReference type="HAMAP-Rule" id="MF_01569"/>
    </source>
</evidence>